<accession>Q1R6K0</accession>
<gene>
    <name evidence="1" type="primary">kbaY</name>
    <name type="ordered locus">UTI89_C3568</name>
</gene>
<keyword id="KW-0456">Lyase</keyword>
<keyword id="KW-0479">Metal-binding</keyword>
<keyword id="KW-0862">Zinc</keyword>
<reference key="1">
    <citation type="journal article" date="2006" name="Proc. Natl. Acad. Sci. U.S.A.">
        <title>Identification of genes subject to positive selection in uropathogenic strains of Escherichia coli: a comparative genomics approach.</title>
        <authorList>
            <person name="Chen S.L."/>
            <person name="Hung C.-S."/>
            <person name="Xu J."/>
            <person name="Reigstad C.S."/>
            <person name="Magrini V."/>
            <person name="Sabo A."/>
            <person name="Blasiar D."/>
            <person name="Bieri T."/>
            <person name="Meyer R.R."/>
            <person name="Ozersky P."/>
            <person name="Armstrong J.R."/>
            <person name="Fulton R.S."/>
            <person name="Latreille J.P."/>
            <person name="Spieth J."/>
            <person name="Hooton T.M."/>
            <person name="Mardis E.R."/>
            <person name="Hultgren S.J."/>
            <person name="Gordon J.I."/>
        </authorList>
    </citation>
    <scope>NUCLEOTIDE SEQUENCE [LARGE SCALE GENOMIC DNA]</scope>
    <source>
        <strain>UTI89 / UPEC</strain>
    </source>
</reference>
<feature type="chain" id="PRO_0000355324" description="D-tagatose-1,6-bisphosphate aldolase subunit KbaY">
    <location>
        <begin position="1"/>
        <end position="286"/>
    </location>
</feature>
<feature type="active site" description="Proton donor" evidence="1">
    <location>
        <position position="82"/>
    </location>
</feature>
<feature type="binding site" evidence="1">
    <location>
        <position position="83"/>
    </location>
    <ligand>
        <name>Zn(2+)</name>
        <dbReference type="ChEBI" id="CHEBI:29105"/>
        <note>catalytic</note>
    </ligand>
</feature>
<feature type="binding site" evidence="1">
    <location>
        <position position="180"/>
    </location>
    <ligand>
        <name>Zn(2+)</name>
        <dbReference type="ChEBI" id="CHEBI:29105"/>
        <note>catalytic</note>
    </ligand>
</feature>
<feature type="binding site" evidence="1">
    <location>
        <position position="181"/>
    </location>
    <ligand>
        <name>dihydroxyacetone phosphate</name>
        <dbReference type="ChEBI" id="CHEBI:57642"/>
    </ligand>
</feature>
<feature type="binding site" evidence="1">
    <location>
        <position position="208"/>
    </location>
    <ligand>
        <name>Zn(2+)</name>
        <dbReference type="ChEBI" id="CHEBI:29105"/>
        <note>catalytic</note>
    </ligand>
</feature>
<feature type="binding site" evidence="1">
    <location>
        <begin position="209"/>
        <end position="211"/>
    </location>
    <ligand>
        <name>dihydroxyacetone phosphate</name>
        <dbReference type="ChEBI" id="CHEBI:57642"/>
    </ligand>
</feature>
<feature type="binding site" evidence="1">
    <location>
        <begin position="230"/>
        <end position="233"/>
    </location>
    <ligand>
        <name>dihydroxyacetone phosphate</name>
        <dbReference type="ChEBI" id="CHEBI:57642"/>
    </ligand>
</feature>
<dbReference type="EC" id="4.1.2.40" evidence="1"/>
<dbReference type="EMBL" id="CP000243">
    <property type="protein sequence ID" value="ABE09014.1"/>
    <property type="molecule type" value="Genomic_DNA"/>
</dbReference>
<dbReference type="RefSeq" id="WP_000022766.1">
    <property type="nucleotide sequence ID" value="NZ_CP064825.1"/>
</dbReference>
<dbReference type="SMR" id="Q1R6K0"/>
<dbReference type="GeneID" id="75203745"/>
<dbReference type="KEGG" id="eci:UTI89_C3568"/>
<dbReference type="HOGENOM" id="CLU_040088_0_1_6"/>
<dbReference type="UniPathway" id="UPA00704">
    <property type="reaction ID" value="UER00716"/>
</dbReference>
<dbReference type="Proteomes" id="UP000001952">
    <property type="component" value="Chromosome"/>
</dbReference>
<dbReference type="GO" id="GO:0005829">
    <property type="term" value="C:cytosol"/>
    <property type="evidence" value="ECO:0007669"/>
    <property type="project" value="TreeGrafter"/>
</dbReference>
<dbReference type="GO" id="GO:0009025">
    <property type="term" value="F:tagatose-bisphosphate aldolase activity"/>
    <property type="evidence" value="ECO:0007669"/>
    <property type="project" value="UniProtKB-UniRule"/>
</dbReference>
<dbReference type="GO" id="GO:0008270">
    <property type="term" value="F:zinc ion binding"/>
    <property type="evidence" value="ECO:0007669"/>
    <property type="project" value="UniProtKB-UniRule"/>
</dbReference>
<dbReference type="GO" id="GO:0005975">
    <property type="term" value="P:carbohydrate metabolic process"/>
    <property type="evidence" value="ECO:0007669"/>
    <property type="project" value="InterPro"/>
</dbReference>
<dbReference type="GO" id="GO:2001059">
    <property type="term" value="P:D-tagatose 6-phosphate catabolic process"/>
    <property type="evidence" value="ECO:0007669"/>
    <property type="project" value="UniProtKB-UniRule"/>
</dbReference>
<dbReference type="CDD" id="cd00453">
    <property type="entry name" value="FTBP_aldolase_II"/>
    <property type="match status" value="1"/>
</dbReference>
<dbReference type="FunFam" id="3.20.20.70:FF:000043">
    <property type="entry name" value="D-tagatose-1,6-bisphosphate aldolase subunit GatY"/>
    <property type="match status" value="1"/>
</dbReference>
<dbReference type="Gene3D" id="3.20.20.70">
    <property type="entry name" value="Aldolase class I"/>
    <property type="match status" value="1"/>
</dbReference>
<dbReference type="HAMAP" id="MF_01293">
    <property type="entry name" value="TagBP_aldolase_KbaY"/>
    <property type="match status" value="1"/>
</dbReference>
<dbReference type="InterPro" id="IPR013785">
    <property type="entry name" value="Aldolase_TIM"/>
</dbReference>
<dbReference type="InterPro" id="IPR050246">
    <property type="entry name" value="Class_II_FBP_aldolase"/>
</dbReference>
<dbReference type="InterPro" id="IPR000771">
    <property type="entry name" value="FBA_II"/>
</dbReference>
<dbReference type="InterPro" id="IPR023788">
    <property type="entry name" value="TagBP_ald_KbaY"/>
</dbReference>
<dbReference type="InterPro" id="IPR011288">
    <property type="entry name" value="TagBP_ald_KbaY/GatY"/>
</dbReference>
<dbReference type="NCBIfam" id="TIGR00167">
    <property type="entry name" value="cbbA"/>
    <property type="match status" value="1"/>
</dbReference>
<dbReference type="NCBIfam" id="NF006626">
    <property type="entry name" value="PRK09195.1"/>
    <property type="match status" value="1"/>
</dbReference>
<dbReference type="NCBIfam" id="NF009374">
    <property type="entry name" value="PRK12737.1"/>
    <property type="match status" value="1"/>
</dbReference>
<dbReference type="NCBIfam" id="NF009375">
    <property type="entry name" value="PRK12738.1"/>
    <property type="match status" value="1"/>
</dbReference>
<dbReference type="NCBIfam" id="TIGR01858">
    <property type="entry name" value="tag_bisphos_ald"/>
    <property type="match status" value="1"/>
</dbReference>
<dbReference type="PANTHER" id="PTHR30304">
    <property type="entry name" value="D-TAGATOSE-1,6-BISPHOSPHATE ALDOLASE"/>
    <property type="match status" value="1"/>
</dbReference>
<dbReference type="PANTHER" id="PTHR30304:SF0">
    <property type="entry name" value="D-TAGATOSE-1,6-BISPHOSPHATE ALDOLASE SUBUNIT GATY-RELATED"/>
    <property type="match status" value="1"/>
</dbReference>
<dbReference type="Pfam" id="PF01116">
    <property type="entry name" value="F_bP_aldolase"/>
    <property type="match status" value="1"/>
</dbReference>
<dbReference type="PIRSF" id="PIRSF001359">
    <property type="entry name" value="F_bP_aldolase_II"/>
    <property type="match status" value="1"/>
</dbReference>
<dbReference type="SUPFAM" id="SSF51569">
    <property type="entry name" value="Aldolase"/>
    <property type="match status" value="1"/>
</dbReference>
<dbReference type="PROSITE" id="PS00602">
    <property type="entry name" value="ALDOLASE_CLASS_II_1"/>
    <property type="match status" value="1"/>
</dbReference>
<dbReference type="PROSITE" id="PS00806">
    <property type="entry name" value="ALDOLASE_CLASS_II_2"/>
    <property type="match status" value="1"/>
</dbReference>
<sequence length="286" mass="31294">MSIISTKYLLQDAQANGYAVPAFNIHNAETIQAILEVCSEMRSPVILAGTPGTFKHIALEEIYALCSAYSTTYNMPLALHLDHHESLDDIRRKVHAGVRSAMIDGSHFPFAENVKLVKSVVDFCHSQDCSVEAELGRLGGVEDDMSVDAESAFLTDPQEAKRFVELTGVDSLAVAIGTAHGLYSKTPKIDFQRLAEIREVVDVPLVLHGASDVPDEFVRRTIELGVTKVNVATELKIAFAGAVKAWFAENPQGNDPRYYMRVGMDAMKEVVRNKINVCGSANRISA</sequence>
<name>KBAY_ECOUT</name>
<comment type="function">
    <text evidence="1">Catalytic subunit of the tagatose-1,6-bisphosphate aldolase KbaYZ, which catalyzes the reversible aldol condensation of dihydroxyacetone phosphate (DHAP or glycerone-phosphate) with glyceraldehyde 3-phosphate (G3P) to produce tagatose 1,6-bisphosphate (TBP). Requires KbaZ subunit for full activity and stability.</text>
</comment>
<comment type="catalytic activity">
    <reaction evidence="1">
        <text>D-tagatofuranose 1,6-bisphosphate = D-glyceraldehyde 3-phosphate + dihydroxyacetone phosphate</text>
        <dbReference type="Rhea" id="RHEA:22948"/>
        <dbReference type="ChEBI" id="CHEBI:57642"/>
        <dbReference type="ChEBI" id="CHEBI:58694"/>
        <dbReference type="ChEBI" id="CHEBI:59776"/>
        <dbReference type="EC" id="4.1.2.40"/>
    </reaction>
</comment>
<comment type="cofactor">
    <cofactor evidence="1">
        <name>Zn(2+)</name>
        <dbReference type="ChEBI" id="CHEBI:29105"/>
    </cofactor>
    <text evidence="1">Binds 1 zinc ion per subunit.</text>
</comment>
<comment type="pathway">
    <text evidence="1">Carbohydrate metabolism; D-tagatose 6-phosphate degradation; D-glyceraldehyde 3-phosphate and glycerone phosphate from D-tagatose 6-phosphate: step 2/2.</text>
</comment>
<comment type="subunit">
    <text evidence="1">Homotetramer. Forms a complex with KbaZ.</text>
</comment>
<comment type="similarity">
    <text evidence="1">Belongs to the class II fructose-bisphosphate aldolase family. TagBP aldolase KbaY subfamily.</text>
</comment>
<evidence type="ECO:0000255" key="1">
    <source>
        <dbReference type="HAMAP-Rule" id="MF_01293"/>
    </source>
</evidence>
<organism>
    <name type="scientific">Escherichia coli (strain UTI89 / UPEC)</name>
    <dbReference type="NCBI Taxonomy" id="364106"/>
    <lineage>
        <taxon>Bacteria</taxon>
        <taxon>Pseudomonadati</taxon>
        <taxon>Pseudomonadota</taxon>
        <taxon>Gammaproteobacteria</taxon>
        <taxon>Enterobacterales</taxon>
        <taxon>Enterobacteriaceae</taxon>
        <taxon>Escherichia</taxon>
    </lineage>
</organism>
<protein>
    <recommendedName>
        <fullName evidence="1">D-tagatose-1,6-bisphosphate aldolase subunit KbaY</fullName>
        <shortName evidence="1">TBPA</shortName>
        <shortName evidence="1">TagBP aldolase</shortName>
        <ecNumber evidence="1">4.1.2.40</ecNumber>
    </recommendedName>
    <alternativeName>
        <fullName evidence="1">D-tagatose-bisphosphate aldolase class II</fullName>
    </alternativeName>
    <alternativeName>
        <fullName evidence="1">Ketose 1,6-bisphosphate aldolase class II</fullName>
    </alternativeName>
    <alternativeName>
        <fullName evidence="1">Tagatose-bisphosphate aldolase</fullName>
    </alternativeName>
</protein>
<proteinExistence type="inferred from homology"/>